<proteinExistence type="evidence at protein level"/>
<gene>
    <name type="primary">Slc6a3</name>
    <name type="synonym">Dat</name>
    <name type="synonym">Dat1</name>
</gene>
<accession>Q61327</accession>
<accession>Q60719</accession>
<accession>Q9R1I2</accession>
<dbReference type="EMBL" id="AF109072">
    <property type="protein sequence ID" value="AAD19643.1"/>
    <property type="molecule type" value="mRNA"/>
</dbReference>
<dbReference type="EMBL" id="BC054119">
    <property type="protein sequence ID" value="AAH54119.1"/>
    <property type="molecule type" value="mRNA"/>
</dbReference>
<dbReference type="EMBL" id="AH003328">
    <property type="protein sequence ID" value="AAA86462.2"/>
    <property type="molecule type" value="Genomic_DNA"/>
</dbReference>
<dbReference type="EMBL" id="U16265">
    <property type="protein sequence ID" value="AAC52283.1"/>
    <property type="molecule type" value="mRNA"/>
</dbReference>
<dbReference type="CCDS" id="CCDS26632.1"/>
<dbReference type="RefSeq" id="NP_034150.1">
    <property type="nucleotide sequence ID" value="NM_010020.3"/>
</dbReference>
<dbReference type="SMR" id="Q61327"/>
<dbReference type="BioGRID" id="199053">
    <property type="interactions" value="2"/>
</dbReference>
<dbReference type="CORUM" id="Q61327"/>
<dbReference type="DIP" id="DIP-41828N"/>
<dbReference type="FunCoup" id="Q61327">
    <property type="interactions" value="97"/>
</dbReference>
<dbReference type="IntAct" id="Q61327">
    <property type="interactions" value="5"/>
</dbReference>
<dbReference type="MINT" id="Q61327"/>
<dbReference type="STRING" id="10090.ENSMUSP00000022100"/>
<dbReference type="BindingDB" id="Q61327"/>
<dbReference type="ChEMBL" id="CHEMBL2799"/>
<dbReference type="DrugBank" id="DB01126">
    <property type="generic name" value="Dutasteride"/>
</dbReference>
<dbReference type="DrugCentral" id="Q61327"/>
<dbReference type="GlyCosmos" id="Q61327">
    <property type="glycosylation" value="4 sites, No reported glycans"/>
</dbReference>
<dbReference type="GlyGen" id="Q61327">
    <property type="glycosylation" value="5 sites, 1 O-linked glycan (1 site)"/>
</dbReference>
<dbReference type="iPTMnet" id="Q61327"/>
<dbReference type="PhosphoSitePlus" id="Q61327"/>
<dbReference type="SwissPalm" id="Q61327"/>
<dbReference type="PaxDb" id="10090-ENSMUSP00000022100"/>
<dbReference type="ProteomicsDB" id="256738"/>
<dbReference type="Antibodypedia" id="2799">
    <property type="antibodies" value="455 antibodies from 45 providers"/>
</dbReference>
<dbReference type="DNASU" id="13162"/>
<dbReference type="Ensembl" id="ENSMUST00000022100.7">
    <property type="protein sequence ID" value="ENSMUSP00000022100.7"/>
    <property type="gene ID" value="ENSMUSG00000021609.7"/>
</dbReference>
<dbReference type="GeneID" id="13162"/>
<dbReference type="KEGG" id="mmu:13162"/>
<dbReference type="UCSC" id="uc007rdn.1">
    <property type="organism name" value="mouse"/>
</dbReference>
<dbReference type="AGR" id="MGI:94862"/>
<dbReference type="CTD" id="6531"/>
<dbReference type="MGI" id="MGI:94862">
    <property type="gene designation" value="Slc6a3"/>
</dbReference>
<dbReference type="VEuPathDB" id="HostDB:ENSMUSG00000021609"/>
<dbReference type="eggNOG" id="KOG3659">
    <property type="taxonomic scope" value="Eukaryota"/>
</dbReference>
<dbReference type="GeneTree" id="ENSGT00940000161224"/>
<dbReference type="HOGENOM" id="CLU_006855_9_0_1"/>
<dbReference type="InParanoid" id="Q61327"/>
<dbReference type="OMA" id="CEASXDA"/>
<dbReference type="OrthoDB" id="6581954at2759"/>
<dbReference type="PhylomeDB" id="Q61327"/>
<dbReference type="TreeFam" id="TF343812"/>
<dbReference type="Reactome" id="R-MMU-379401">
    <property type="pathway name" value="Dopamine clearance from the synaptic cleft"/>
</dbReference>
<dbReference type="Reactome" id="R-MMU-442660">
    <property type="pathway name" value="Na+/Cl- dependent neurotransmitter transporters"/>
</dbReference>
<dbReference type="BioGRID-ORCS" id="13162">
    <property type="hits" value="3 hits in 81 CRISPR screens"/>
</dbReference>
<dbReference type="ChiTaRS" id="Slc6a3">
    <property type="organism name" value="mouse"/>
</dbReference>
<dbReference type="PRO" id="PR:Q61327"/>
<dbReference type="Proteomes" id="UP000000589">
    <property type="component" value="Chromosome 13"/>
</dbReference>
<dbReference type="RNAct" id="Q61327">
    <property type="molecule type" value="protein"/>
</dbReference>
<dbReference type="Bgee" id="ENSMUSG00000021609">
    <property type="expression patterns" value="Expressed in substantia nigra and 26 other cell types or tissues"/>
</dbReference>
<dbReference type="GO" id="GO:0030424">
    <property type="term" value="C:axon"/>
    <property type="evidence" value="ECO:0000314"/>
    <property type="project" value="MGI"/>
</dbReference>
<dbReference type="GO" id="GO:0043679">
    <property type="term" value="C:axon terminus"/>
    <property type="evidence" value="ECO:0000314"/>
    <property type="project" value="UniProtKB"/>
</dbReference>
<dbReference type="GO" id="GO:0009986">
    <property type="term" value="C:cell surface"/>
    <property type="evidence" value="ECO:0000314"/>
    <property type="project" value="UniProtKB"/>
</dbReference>
<dbReference type="GO" id="GO:0098691">
    <property type="term" value="C:dopaminergic synapse"/>
    <property type="evidence" value="ECO:0007669"/>
    <property type="project" value="Ensembl"/>
</dbReference>
<dbReference type="GO" id="GO:0016600">
    <property type="term" value="C:flotillin complex"/>
    <property type="evidence" value="ECO:0007669"/>
    <property type="project" value="Ensembl"/>
</dbReference>
<dbReference type="GO" id="GO:0043025">
    <property type="term" value="C:neuronal cell body"/>
    <property type="evidence" value="ECO:0007669"/>
    <property type="project" value="Ensembl"/>
</dbReference>
<dbReference type="GO" id="GO:0045211">
    <property type="term" value="C:postsynaptic membrane"/>
    <property type="evidence" value="ECO:0007669"/>
    <property type="project" value="Ensembl"/>
</dbReference>
<dbReference type="GO" id="GO:0042734">
    <property type="term" value="C:presynaptic membrane"/>
    <property type="evidence" value="ECO:0007669"/>
    <property type="project" value="Ensembl"/>
</dbReference>
<dbReference type="GO" id="GO:0043176">
    <property type="term" value="F:amine binding"/>
    <property type="evidence" value="ECO:0007669"/>
    <property type="project" value="Ensembl"/>
</dbReference>
<dbReference type="GO" id="GO:0035240">
    <property type="term" value="F:dopamine binding"/>
    <property type="evidence" value="ECO:0000314"/>
    <property type="project" value="MGI"/>
</dbReference>
<dbReference type="GO" id="GO:0005330">
    <property type="term" value="F:dopamine:sodium symporter activity"/>
    <property type="evidence" value="ECO:0000314"/>
    <property type="project" value="UniProtKB"/>
</dbReference>
<dbReference type="GO" id="GO:1901363">
    <property type="term" value="F:heterocyclic compound binding"/>
    <property type="evidence" value="ECO:0007669"/>
    <property type="project" value="Ensembl"/>
</dbReference>
<dbReference type="GO" id="GO:0046872">
    <property type="term" value="F:metal ion binding"/>
    <property type="evidence" value="ECO:0007669"/>
    <property type="project" value="UniProtKB-KW"/>
</dbReference>
<dbReference type="GO" id="GO:0008504">
    <property type="term" value="F:monoamine transmembrane transporter activity"/>
    <property type="evidence" value="ECO:0000315"/>
    <property type="project" value="ARUK-UCL"/>
</dbReference>
<dbReference type="GO" id="GO:0005326">
    <property type="term" value="F:neurotransmitter transmembrane transporter activity"/>
    <property type="evidence" value="ECO:0000315"/>
    <property type="project" value="ARUK-UCL"/>
</dbReference>
<dbReference type="GO" id="GO:0005334">
    <property type="term" value="F:norepinephrine:sodium symporter activity"/>
    <property type="evidence" value="ECO:0007669"/>
    <property type="project" value="Ensembl"/>
</dbReference>
<dbReference type="GO" id="GO:0002020">
    <property type="term" value="F:protease binding"/>
    <property type="evidence" value="ECO:0007669"/>
    <property type="project" value="Ensembl"/>
</dbReference>
<dbReference type="GO" id="GO:0051721">
    <property type="term" value="F:protein phosphatase 2A binding"/>
    <property type="evidence" value="ECO:0007669"/>
    <property type="project" value="Ensembl"/>
</dbReference>
<dbReference type="GO" id="GO:0044877">
    <property type="term" value="F:protein-containing complex binding"/>
    <property type="evidence" value="ECO:0007669"/>
    <property type="project" value="Ensembl"/>
</dbReference>
<dbReference type="GO" id="GO:0005102">
    <property type="term" value="F:signaling receptor binding"/>
    <property type="evidence" value="ECO:0007669"/>
    <property type="project" value="Ensembl"/>
</dbReference>
<dbReference type="GO" id="GO:0021984">
    <property type="term" value="P:adenohypophysis development"/>
    <property type="evidence" value="ECO:0000315"/>
    <property type="project" value="MGI"/>
</dbReference>
<dbReference type="GO" id="GO:0050890">
    <property type="term" value="P:cognition"/>
    <property type="evidence" value="ECO:0000315"/>
    <property type="project" value="MGI"/>
</dbReference>
<dbReference type="GO" id="GO:0042416">
    <property type="term" value="P:dopamine biosynthetic process"/>
    <property type="evidence" value="ECO:0000315"/>
    <property type="project" value="MGI"/>
</dbReference>
<dbReference type="GO" id="GO:0042420">
    <property type="term" value="P:dopamine catabolic process"/>
    <property type="evidence" value="ECO:0000315"/>
    <property type="project" value="MGI"/>
</dbReference>
<dbReference type="GO" id="GO:0015872">
    <property type="term" value="P:dopamine transport"/>
    <property type="evidence" value="ECO:0000315"/>
    <property type="project" value="MGI"/>
</dbReference>
<dbReference type="GO" id="GO:0090494">
    <property type="term" value="P:dopamine uptake"/>
    <property type="evidence" value="ECO:0000315"/>
    <property type="project" value="ARUK-UCL"/>
</dbReference>
<dbReference type="GO" id="GO:1990384">
    <property type="term" value="P:hyaloid vascular plexus regression"/>
    <property type="evidence" value="ECO:0000314"/>
    <property type="project" value="UniProtKB"/>
</dbReference>
<dbReference type="GO" id="GO:0007595">
    <property type="term" value="P:lactation"/>
    <property type="evidence" value="ECO:0000315"/>
    <property type="project" value="MGI"/>
</dbReference>
<dbReference type="GO" id="GO:0007626">
    <property type="term" value="P:locomotory behavior"/>
    <property type="evidence" value="ECO:0000315"/>
    <property type="project" value="MGI"/>
</dbReference>
<dbReference type="GO" id="GO:0015844">
    <property type="term" value="P:monoamine transport"/>
    <property type="evidence" value="ECO:0000266"/>
    <property type="project" value="MGI"/>
</dbReference>
<dbReference type="GO" id="GO:0006836">
    <property type="term" value="P:neurotransmitter transport"/>
    <property type="evidence" value="ECO:0000315"/>
    <property type="project" value="ARUK-UCL"/>
</dbReference>
<dbReference type="GO" id="GO:0001504">
    <property type="term" value="P:neurotransmitter uptake"/>
    <property type="evidence" value="ECO:0000314"/>
    <property type="project" value="SynGO"/>
</dbReference>
<dbReference type="GO" id="GO:0040018">
    <property type="term" value="P:positive regulation of multicellular organism growth"/>
    <property type="evidence" value="ECO:0000315"/>
    <property type="project" value="MGI"/>
</dbReference>
<dbReference type="GO" id="GO:0060134">
    <property type="term" value="P:prepulse inhibition"/>
    <property type="evidence" value="ECO:0000315"/>
    <property type="project" value="MGI"/>
</dbReference>
<dbReference type="GO" id="GO:0042053">
    <property type="term" value="P:regulation of dopamine metabolic process"/>
    <property type="evidence" value="ECO:0000315"/>
    <property type="project" value="MGI"/>
</dbReference>
<dbReference type="GO" id="GO:0051591">
    <property type="term" value="P:response to cAMP"/>
    <property type="evidence" value="ECO:0007669"/>
    <property type="project" value="Ensembl"/>
</dbReference>
<dbReference type="GO" id="GO:0042220">
    <property type="term" value="P:response to cocaine"/>
    <property type="evidence" value="ECO:0000314"/>
    <property type="project" value="MGI"/>
</dbReference>
<dbReference type="GO" id="GO:0045471">
    <property type="term" value="P:response to ethanol"/>
    <property type="evidence" value="ECO:0007669"/>
    <property type="project" value="Ensembl"/>
</dbReference>
<dbReference type="GO" id="GO:0010039">
    <property type="term" value="P:response to iron ion"/>
    <property type="evidence" value="ECO:0007669"/>
    <property type="project" value="Ensembl"/>
</dbReference>
<dbReference type="GO" id="GO:0035094">
    <property type="term" value="P:response to nicotine"/>
    <property type="evidence" value="ECO:0007669"/>
    <property type="project" value="Ensembl"/>
</dbReference>
<dbReference type="GO" id="GO:0009410">
    <property type="term" value="P:response to xenobiotic stimulus"/>
    <property type="evidence" value="ECO:0007669"/>
    <property type="project" value="Ensembl"/>
</dbReference>
<dbReference type="GO" id="GO:0007608">
    <property type="term" value="P:sensory perception of smell"/>
    <property type="evidence" value="ECO:0000315"/>
    <property type="project" value="MGI"/>
</dbReference>
<dbReference type="InterPro" id="IPR000175">
    <property type="entry name" value="Na/ntran_symport"/>
</dbReference>
<dbReference type="InterPro" id="IPR002436">
    <property type="entry name" value="Na/ntran_symport_dopamine"/>
</dbReference>
<dbReference type="InterPro" id="IPR037272">
    <property type="entry name" value="SNS_sf"/>
</dbReference>
<dbReference type="NCBIfam" id="NF037979">
    <property type="entry name" value="Na_transp"/>
    <property type="match status" value="1"/>
</dbReference>
<dbReference type="PANTHER" id="PTHR11616:SF38">
    <property type="entry name" value="SODIUM-DEPENDENT DOPAMINE TRANSPORTER"/>
    <property type="match status" value="1"/>
</dbReference>
<dbReference type="PANTHER" id="PTHR11616">
    <property type="entry name" value="SODIUM/CHLORIDE DEPENDENT TRANSPORTER"/>
    <property type="match status" value="1"/>
</dbReference>
<dbReference type="Pfam" id="PF00209">
    <property type="entry name" value="SNF"/>
    <property type="match status" value="1"/>
</dbReference>
<dbReference type="PRINTS" id="PR01202">
    <property type="entry name" value="DOPTRANSPORT"/>
</dbReference>
<dbReference type="PRINTS" id="PR00176">
    <property type="entry name" value="NANEUSMPORT"/>
</dbReference>
<dbReference type="SUPFAM" id="SSF161070">
    <property type="entry name" value="SNF-like"/>
    <property type="match status" value="1"/>
</dbReference>
<dbReference type="PROSITE" id="PS00610">
    <property type="entry name" value="NA_NEUROTRAN_SYMP_1"/>
    <property type="match status" value="1"/>
</dbReference>
<dbReference type="PROSITE" id="PS00754">
    <property type="entry name" value="NA_NEUROTRAN_SYMP_2"/>
    <property type="match status" value="1"/>
</dbReference>
<dbReference type="PROSITE" id="PS50267">
    <property type="entry name" value="NA_NEUROTRAN_SYMP_3"/>
    <property type="match status" value="1"/>
</dbReference>
<reference key="1">
    <citation type="journal article" date="1999" name="Gene">
        <title>Molecular cloning of the mouse dopamine transporter and pharmacological comparison with the human homologue.</title>
        <authorList>
            <person name="Wu X."/>
            <person name="Gu H.H."/>
        </authorList>
    </citation>
    <scope>NUCLEOTIDE SEQUENCE [MRNA]</scope>
    <scope>FUNCTION</scope>
    <scope>TRANSPORTER ACTIVITY</scope>
    <scope>BIOPHYSICOCHEMICAL PROPERTIES</scope>
    <scope>ACTIVITY REGULATION</scope>
    <source>
        <strain>C57BL/6J</strain>
        <tissue>Brain</tissue>
    </source>
</reference>
<reference key="2">
    <citation type="journal article" date="2004" name="Genome Res.">
        <title>The status, quality, and expansion of the NIH full-length cDNA project: the Mammalian Gene Collection (MGC).</title>
        <authorList>
            <consortium name="The MGC Project Team"/>
        </authorList>
    </citation>
    <scope>NUCLEOTIDE SEQUENCE [LARGE SCALE MRNA]</scope>
    <source>
        <tissue>Brain</tissue>
    </source>
</reference>
<reference key="3">
    <citation type="journal article" date="1995" name="Brain Res. Mol. Brain Res.">
        <title>Human and mouse dopamine transporter genes: conservation of 5'-flanking sequence elements and gene structures.</title>
        <authorList>
            <person name="Donovan D.M."/>
            <person name="Vandenbergh D.J."/>
            <person name="Perry M.P."/>
            <person name="Bird G.S."/>
            <person name="Ingersoll R."/>
            <person name="Nanthakumar E."/>
            <person name="Uhl G.R."/>
        </authorList>
    </citation>
    <scope>NUCLEOTIDE SEQUENCE [GENOMIC DNA] OF 1-343</scope>
    <source>
        <strain>BALB/cJ</strain>
        <tissue>Brain</tissue>
    </source>
</reference>
<reference key="4">
    <citation type="journal article" date="2002" name="J. Neurosci.">
        <title>The multiple LIM domain-containing adaptor protein Hic-5 synaptically colocalizes and interacts with the dopamine transporter.</title>
        <authorList>
            <person name="Carneiro A.M.D."/>
            <person name="Ingram S.L."/>
            <person name="Beaulieu J.-M."/>
            <person name="Sweeney A."/>
            <person name="Amara S.G."/>
            <person name="Thomas S.M."/>
            <person name="Caron M.G."/>
            <person name="Torres G.E."/>
        </authorList>
    </citation>
    <scope>INTERACTION WITH TGFB1I1</scope>
</reference>
<reference key="5">
    <citation type="journal article" date="2003" name="Mol. Pharmacol.">
        <title>Cocaine affinity decreased by mutations of aromatic residue phenylalanine 105 in the transmembrane domain 2 of dopamine transporter.</title>
        <authorList>
            <person name="Wu X."/>
            <person name="Gu H.H."/>
        </authorList>
    </citation>
    <scope>MUTAGENESIS OF PHE-105</scope>
    <scope>FUNCTION</scope>
    <scope>SUBCELLULAR LOCATION</scope>
    <scope>TRANSPORTER ACTIVITY</scope>
    <scope>BIOPHYSICOCHEMICAL PROPERTIES</scope>
</reference>
<reference key="6">
    <citation type="journal article" date="2007" name="Neuron">
        <title>Sept4, a component of presynaptic scaffold and Lewy bodies, is required for the suppression of alpha-synuclein neurotoxicity.</title>
        <authorList>
            <person name="Ihara M."/>
            <person name="Yamasaki N."/>
            <person name="Hagiwara A."/>
            <person name="Tanigaki A."/>
            <person name="Kitano A."/>
            <person name="Hikawa R."/>
            <person name="Tomimoto H."/>
            <person name="Noda M."/>
            <person name="Takanashi M."/>
            <person name="Mori H."/>
            <person name="Hattori N."/>
            <person name="Miyakawa T."/>
            <person name="Kinoshita M."/>
        </authorList>
    </citation>
    <scope>INTERACTION WITH SEPTIN4</scope>
    <scope>SUBCELLULAR LOCATION</scope>
    <scope>TISSUE SPECIFICITY</scope>
</reference>
<reference key="7">
    <citation type="journal article" date="2009" name="J. Neurosci.">
        <title>Physical and functional interaction between the dopamine transporter and the synaptic vesicle protein synaptogyrin-3.</title>
        <authorList>
            <person name="Egana L.A."/>
            <person name="Cuevas R.A."/>
            <person name="Baust T.B."/>
            <person name="Parra L.A."/>
            <person name="Leak R.K."/>
            <person name="Hochendoner S."/>
            <person name="Pena K."/>
            <person name="Quiroz M."/>
            <person name="Hong W.C."/>
            <person name="Dorostkar M.M."/>
            <person name="Janz R."/>
            <person name="Sitte H.H."/>
            <person name="Torres G.E."/>
        </authorList>
    </citation>
    <scope>INTERACTION WITH SYNGR3 AND SLC18A2</scope>
    <scope>TISSUE SPECIFICITY</scope>
</reference>
<reference key="8">
    <citation type="journal article" date="2019" name="Nat. Cell Biol.">
        <title>An opsin 5-dopamine pathway mediates light-dependent vascular development in the eye.</title>
        <authorList>
            <person name="Nguyen M.T."/>
            <person name="Vemaraju S."/>
            <person name="Nayak G."/>
            <person name="Odaka Y."/>
            <person name="Buhr E.D."/>
            <person name="Alonzo N."/>
            <person name="Tran U."/>
            <person name="Batie M."/>
            <person name="Upton B.A."/>
            <person name="Darvas M."/>
            <person name="Kozmik Z."/>
            <person name="Rao S."/>
            <person name="Hegde R.S."/>
            <person name="Iuvone P.M."/>
            <person name="Van Gelder R.N."/>
            <person name="Lang R.A."/>
        </authorList>
    </citation>
    <scope>FUNCTION</scope>
    <scope>TISSUE SPECIFICITY</scope>
</reference>
<protein>
    <recommendedName>
        <fullName>Sodium-dependent dopamine transporter</fullName>
        <shortName>DA transporter</shortName>
        <shortName evidence="3">DAT</shortName>
    </recommendedName>
    <alternativeName>
        <fullName>Solute carrier family 6 member 3</fullName>
    </alternativeName>
</protein>
<keyword id="KW-1003">Cell membrane</keyword>
<keyword id="KW-0966">Cell projection</keyword>
<keyword id="KW-1015">Disulfide bond</keyword>
<keyword id="KW-0325">Glycoprotein</keyword>
<keyword id="KW-0472">Membrane</keyword>
<keyword id="KW-0479">Metal-binding</keyword>
<keyword id="KW-0532">Neurotransmitter transport</keyword>
<keyword id="KW-1185">Reference proteome</keyword>
<keyword id="KW-0915">Sodium</keyword>
<keyword id="KW-0769">Symport</keyword>
<keyword id="KW-0812">Transmembrane</keyword>
<keyword id="KW-1133">Transmembrane helix</keyword>
<keyword id="KW-0813">Transport</keyword>
<comment type="function">
    <text evidence="2 5 7 10">Mediates sodium- and chloride-dependent transport of dopamine (PubMed:10375632, PubMed:12606774). Also mediates sodium- and chloride-dependent transport of norepinephrine (also known as noradrenaline) (By similarity). Regulator of light-dependent retinal hyaloid vessel regression, downstream of OPN5 signaling (PubMed:30936473).</text>
</comment>
<comment type="catalytic activity">
    <reaction evidence="5 7">
        <text>dopamine(out) + chloride(out) + Na(+)(out) = dopamine(in) + chloride(in) + Na(+)(in)</text>
        <dbReference type="Rhea" id="RHEA:70919"/>
        <dbReference type="ChEBI" id="CHEBI:17996"/>
        <dbReference type="ChEBI" id="CHEBI:29101"/>
        <dbReference type="ChEBI" id="CHEBI:59905"/>
    </reaction>
</comment>
<comment type="catalytic activity">
    <reaction evidence="2">
        <text>(R)-noradrenaline(out) + chloride(out) + Na(+)(out) = (R)-noradrenaline(in) + chloride(in) + Na(+)(in)</text>
        <dbReference type="Rhea" id="RHEA:70923"/>
        <dbReference type="ChEBI" id="CHEBI:17996"/>
        <dbReference type="ChEBI" id="CHEBI:29101"/>
        <dbReference type="ChEBI" id="CHEBI:72587"/>
    </reaction>
</comment>
<comment type="catalytic activity">
    <reaction evidence="2">
        <text>dopamine(out) + chloride(out) + 2 Na(+)(out) = dopamine(in) + chloride(in) + 2 Na(+)(in)</text>
        <dbReference type="Rhea" id="RHEA:70931"/>
        <dbReference type="ChEBI" id="CHEBI:17996"/>
        <dbReference type="ChEBI" id="CHEBI:29101"/>
        <dbReference type="ChEBI" id="CHEBI:59905"/>
    </reaction>
</comment>
<comment type="activity regulation">
    <text evidence="3 5">Inhibited by amphetamine, bupropion, cocaine and ritalin (PubMed:10375632). Inhibited by zinc ions (By similarity).</text>
</comment>
<comment type="biophysicochemical properties">
    <kinetics>
        <KM evidence="5">2 uM for dopamine</KM>
        <KM evidence="7">2.1 uM for dopamine</KM>
    </kinetics>
</comment>
<comment type="subunit">
    <text evidence="3 6 8 9">Monomer (By similarity). Homooligomer; disulfide-linked (By similarity). Interacts with PRKCABP and TGFB1I1 (PubMed:12177201). Interacts (via N-terminus) with SYNGR3 (via N-terminus) (PubMed:19357284). Interacts with SLC18A2 (PubMed:19357284). Interacts with TOR1A (ATP-bound); TOR1A regulates SLC6A3 subcellular location (By similarity). Interacts with alpha-synuclein/SNCA (By similarity). Interacts with SEPTIN4 (PubMed:17296554).</text>
</comment>
<comment type="interaction">
    <interactant intactId="EBI-7839708">
        <id>Q61327</id>
    </interactant>
    <interactant intactId="EBI-2310271">
        <id>O55042</id>
        <label>Snca</label>
    </interactant>
    <organismsDiffer>false</organismsDiffer>
    <experiments>5</experiments>
</comment>
<comment type="interaction">
    <interactant intactId="EBI-7839708">
        <id>Q61327</id>
    </interactant>
    <interactant intactId="EBI-985879">
        <id>P37840</id>
        <label>SNCA</label>
    </interactant>
    <organismsDiffer>true</organismsDiffer>
    <experiments>5</experiments>
</comment>
<comment type="subcellular location">
    <subcellularLocation>
        <location evidence="7">Cell membrane</location>
        <topology evidence="3">Multi-pass membrane protein</topology>
    </subcellularLocation>
    <subcellularLocation>
        <location evidence="2">Cell projection</location>
        <location evidence="2">Neuron projection</location>
    </subcellularLocation>
    <subcellularLocation>
        <location evidence="8">Cell projection</location>
        <location evidence="8">Axon</location>
    </subcellularLocation>
    <text evidence="2 8">Localizes to neurite tips in neuronal cells (By similarity). Colocalizes with SEPTIN4 at axon terminals, especially at the varicosities (PubMed:17296554).</text>
</comment>
<comment type="tissue specificity">
    <text evidence="8 9 10">Found in the substantia nigra and ventral tegmental dopamine neurons, in fibers of the medial forebrain bundle ascending into the striatum, and within dense fiber networks and varicosities in the dorsal and ventral striatum (at protein level) (PubMed:17296554, PubMed:19357284). Lower expression in the cortex (at protein level) (PubMed:19357284). Absent from the corpus callosum (PubMed:19357284). Expressed throughout the retina at postnatal day 8 (PubMed:30936473).</text>
</comment>
<comment type="miscellaneous">
    <text>This protein is the target of psychomotor stimulants such as amphetamines and cocaine.</text>
</comment>
<comment type="similarity">
    <text evidence="11">Belongs to the sodium:neurotransmitter symporter (SNF) (TC 2.A.22) family. SLC6A3 subfamily.</text>
</comment>
<feature type="chain" id="PRO_0000214753" description="Sodium-dependent dopamine transporter">
    <location>
        <begin position="1"/>
        <end position="619"/>
    </location>
</feature>
<feature type="topological domain" description="Cytoplasmic" evidence="3">
    <location>
        <begin position="1"/>
        <end position="56"/>
    </location>
</feature>
<feature type="transmembrane region" description="Discontinuously helical; Name=1" evidence="3">
    <location>
        <begin position="57"/>
        <end position="95"/>
    </location>
</feature>
<feature type="transmembrane region" description="Helical; Name=2" evidence="3">
    <location>
        <begin position="96"/>
        <end position="127"/>
    </location>
</feature>
<feature type="transmembrane region" description="Helical; Name=3" evidence="3">
    <location>
        <begin position="128"/>
        <end position="171"/>
    </location>
</feature>
<feature type="topological domain" description="Extracellular" evidence="3">
    <location>
        <begin position="172"/>
        <end position="235"/>
    </location>
</feature>
<feature type="transmembrane region" description="Helical; Name=4" evidence="3">
    <location>
        <begin position="236"/>
        <end position="255"/>
    </location>
</feature>
<feature type="transmembrane region" description="Helical; Name=5" evidence="3">
    <location>
        <begin position="256"/>
        <end position="286"/>
    </location>
</feature>
<feature type="topological domain" description="Extracellular" evidence="3">
    <location>
        <begin position="287"/>
        <end position="305"/>
    </location>
</feature>
<feature type="transmembrane region" description="Discontinuously helical; Name=6" evidence="3">
    <location>
        <begin position="306"/>
        <end position="334"/>
    </location>
</feature>
<feature type="transmembrane region" description="Helical; Name=7" evidence="3">
    <location>
        <begin position="335"/>
        <end position="375"/>
    </location>
</feature>
<feature type="topological domain" description="Extracellular" evidence="3">
    <location>
        <begin position="376"/>
        <end position="399"/>
    </location>
</feature>
<feature type="transmembrane region" description="Helical; Name=8" evidence="3">
    <location>
        <begin position="400"/>
        <end position="441"/>
    </location>
</feature>
<feature type="transmembrane region" description="Helical; Name=9" evidence="3">
    <location>
        <begin position="442"/>
        <end position="465"/>
    </location>
</feature>
<feature type="transmembrane region" description="Helical; Name=10" evidence="3">
    <location>
        <begin position="466"/>
        <end position="498"/>
    </location>
</feature>
<feature type="topological domain" description="Cytoplasmic" evidence="3">
    <location>
        <begin position="499"/>
        <end position="515"/>
    </location>
</feature>
<feature type="transmembrane region" description="Helical; Name=11" evidence="3">
    <location>
        <begin position="516"/>
        <end position="541"/>
    </location>
</feature>
<feature type="topological domain" description="Extracellular" evidence="3">
    <location>
        <begin position="542"/>
        <end position="552"/>
    </location>
</feature>
<feature type="transmembrane region" description="Helical; Name=12" evidence="3">
    <location>
        <begin position="553"/>
        <end position="582"/>
    </location>
</feature>
<feature type="topological domain" description="Cytoplasmic" evidence="3">
    <location>
        <begin position="583"/>
        <end position="619"/>
    </location>
</feature>
<feature type="region of interest" description="Interaction with TGFB1I1" evidence="1">
    <location>
        <begin position="560"/>
        <end position="589"/>
    </location>
</feature>
<feature type="binding site" evidence="3">
    <location>
        <position position="75"/>
    </location>
    <ligand>
        <name>Na(+)</name>
        <dbReference type="ChEBI" id="CHEBI:29101"/>
        <label>1</label>
    </ligand>
</feature>
<feature type="binding site" evidence="3">
    <location>
        <position position="77"/>
    </location>
    <ligand>
        <name>Na(+)</name>
        <dbReference type="ChEBI" id="CHEBI:29101"/>
        <label>2</label>
    </ligand>
</feature>
<feature type="binding site" evidence="3">
    <location>
        <position position="78"/>
    </location>
    <ligand>
        <name>Na(+)</name>
        <dbReference type="ChEBI" id="CHEBI:29101"/>
        <label>1</label>
    </ligand>
</feature>
<feature type="binding site" evidence="3">
    <location>
        <position position="79"/>
    </location>
    <ligand>
        <name>dopamine</name>
        <dbReference type="ChEBI" id="CHEBI:59905"/>
    </ligand>
</feature>
<feature type="binding site" evidence="3">
    <location>
        <position position="79"/>
    </location>
    <ligand>
        <name>Na(+)</name>
        <dbReference type="ChEBI" id="CHEBI:29101"/>
        <label>1</label>
    </ligand>
</feature>
<feature type="binding site" evidence="3">
    <location>
        <position position="79"/>
    </location>
    <ligand>
        <name>Na(+)</name>
        <dbReference type="ChEBI" id="CHEBI:29101"/>
        <label>2</label>
    </ligand>
</feature>
<feature type="binding site" evidence="3">
    <location>
        <position position="82"/>
    </location>
    <ligand>
        <name>Na(+)</name>
        <dbReference type="ChEBI" id="CHEBI:29101"/>
        <label>2</label>
    </ligand>
</feature>
<feature type="binding site" evidence="3">
    <location>
        <position position="149"/>
    </location>
    <ligand>
        <name>dopamine</name>
        <dbReference type="ChEBI" id="CHEBI:59905"/>
    </ligand>
</feature>
<feature type="binding site" evidence="3">
    <location>
        <position position="153"/>
    </location>
    <ligand>
        <name>dopamine</name>
        <dbReference type="ChEBI" id="CHEBI:59905"/>
    </ligand>
</feature>
<feature type="binding site" evidence="3">
    <location>
        <position position="316"/>
    </location>
    <ligand>
        <name>chloride</name>
        <dbReference type="ChEBI" id="CHEBI:17996"/>
    </ligand>
</feature>
<feature type="binding site" evidence="3">
    <location>
        <position position="319"/>
    </location>
    <ligand>
        <name>dopamine</name>
        <dbReference type="ChEBI" id="CHEBI:59905"/>
    </ligand>
</feature>
<feature type="binding site" evidence="3">
    <location>
        <position position="320"/>
    </location>
    <ligand>
        <name>chloride</name>
        <dbReference type="ChEBI" id="CHEBI:17996"/>
    </ligand>
</feature>
<feature type="binding site" evidence="3">
    <location>
        <position position="320"/>
    </location>
    <ligand>
        <name>Na(+)</name>
        <dbReference type="ChEBI" id="CHEBI:29101"/>
        <label>2</label>
    </ligand>
</feature>
<feature type="binding site" evidence="3">
    <location>
        <position position="352"/>
    </location>
    <ligand>
        <name>Na(+)</name>
        <dbReference type="ChEBI" id="CHEBI:29101"/>
        <label>2</label>
    </ligand>
</feature>
<feature type="binding site" evidence="3">
    <location>
        <position position="356"/>
    </location>
    <ligand>
        <name>chloride</name>
        <dbReference type="ChEBI" id="CHEBI:17996"/>
    </ligand>
</feature>
<feature type="binding site" evidence="3">
    <location>
        <position position="417"/>
    </location>
    <ligand>
        <name>Na(+)</name>
        <dbReference type="ChEBI" id="CHEBI:29101"/>
        <label>1</label>
    </ligand>
</feature>
<feature type="binding site" evidence="3">
    <location>
        <position position="420"/>
    </location>
    <ligand>
        <name>Na(+)</name>
        <dbReference type="ChEBI" id="CHEBI:29101"/>
        <label>1</label>
    </ligand>
</feature>
<feature type="binding site" evidence="3">
    <location>
        <position position="421"/>
    </location>
    <ligand>
        <name>dopamine</name>
        <dbReference type="ChEBI" id="CHEBI:59905"/>
    </ligand>
</feature>
<feature type="binding site" evidence="3">
    <location>
        <position position="421"/>
    </location>
    <ligand>
        <name>Na(+)</name>
        <dbReference type="ChEBI" id="CHEBI:29101"/>
        <label>1</label>
    </ligand>
</feature>
<feature type="binding site" evidence="3">
    <location>
        <position position="422"/>
    </location>
    <ligand>
        <name>dopamine</name>
        <dbReference type="ChEBI" id="CHEBI:59905"/>
    </ligand>
</feature>
<feature type="site" description="Contributes to high-affinity binding to cocaine" evidence="7">
    <location>
        <position position="105"/>
    </location>
</feature>
<feature type="glycosylation site" description="N-linked (GlcNAc...) asparagine" evidence="3">
    <location>
        <position position="181"/>
    </location>
</feature>
<feature type="glycosylation site" description="N-linked (GlcNAc...) asparagine" evidence="3">
    <location>
        <position position="188"/>
    </location>
</feature>
<feature type="glycosylation site" description="N-linked (GlcNAc...) asparagine" evidence="4">
    <location>
        <position position="196"/>
    </location>
</feature>
<feature type="glycosylation site" description="N-linked (GlcNAc...) asparagine" evidence="4">
    <location>
        <position position="204"/>
    </location>
</feature>
<feature type="disulfide bond" evidence="3">
    <location>
        <begin position="180"/>
        <end position="189"/>
    </location>
</feature>
<feature type="disulfide bond" description="Interchain" evidence="3">
    <location>
        <position position="305"/>
    </location>
</feature>
<feature type="mutagenesis site" description="Very low dopamine transporter activity." evidence="7">
    <original>F</original>
    <variation>A</variation>
    <variation>I</variation>
    <variation>L</variation>
    <variation>N</variation>
    <variation>Q</variation>
    <variation>S</variation>
    <variation>T</variation>
    <location>
        <position position="105"/>
    </location>
</feature>
<feature type="mutagenesis site" description="Reduced sensitivity to cocaine." evidence="7">
    <original>F</original>
    <variation>C</variation>
    <location>
        <position position="105"/>
    </location>
</feature>
<feature type="mutagenesis site" description="Functional dopamine transporter with 4-fold decrease in cocaine sensitivity." evidence="7">
    <original>F</original>
    <variation>M</variation>
    <location>
        <position position="105"/>
    </location>
</feature>
<feature type="mutagenesis site" description="Retention of dopamine transporter activity and high sensitivity to cocaine." evidence="7">
    <original>F</original>
    <variation>W</variation>
    <variation>Y</variation>
    <location>
        <position position="105"/>
    </location>
</feature>
<organism>
    <name type="scientific">Mus musculus</name>
    <name type="common">Mouse</name>
    <dbReference type="NCBI Taxonomy" id="10090"/>
    <lineage>
        <taxon>Eukaryota</taxon>
        <taxon>Metazoa</taxon>
        <taxon>Chordata</taxon>
        <taxon>Craniata</taxon>
        <taxon>Vertebrata</taxon>
        <taxon>Euteleostomi</taxon>
        <taxon>Mammalia</taxon>
        <taxon>Eutheria</taxon>
        <taxon>Euarchontoglires</taxon>
        <taxon>Glires</taxon>
        <taxon>Rodentia</taxon>
        <taxon>Myomorpha</taxon>
        <taxon>Muroidea</taxon>
        <taxon>Muridae</taxon>
        <taxon>Murinae</taxon>
        <taxon>Mus</taxon>
        <taxon>Mus</taxon>
    </lineage>
</organism>
<sequence length="619" mass="68805">MSKSKCSVGPMSSVVAPAKEPNAVGPREVELILVKEQNGVQLTNSTLINPPQTPVEVQERETWSKKIDFLLSVIGFAVDLANVWRFPYLCYKNGGGAFLVPYLLFMVIAGMPLFYMELALGQFNREGAAGVWKICPVLKGVGFTVILISFYVGFFYNVIIAWALHYFFSSFTMDLPWIHCNNTWNSPNCSDAHSSNSSDGLGLNDTFGTTPAAEYFERGVLHLHQSRGIDDLGPPRWQLTACLVLVIVLLYFSLWKGVKTSGKVVWITATMPYVVLTALLLRGVTLPGAMDGIRAYLSVDFYRLCEASVWIDAATQVCFSLGVGFGVLIAFSSYNKFTNNCYRDAIITTSINSLTSFSSGFVVFSFLGYMAQKHNVPIRDVATDGPGLIFIIYPEAIATLPLSSAWAAVFFLMLLTLGIDSAMGGMESVITGLVDEFQLLHRHRELFTLGIVLATFLLSLFCVTNGGIYVFTLLDHFAAGTSILFGVLIEAIGVAWFYGVQQFSDDIKQMTGQRPNLYWRLCWKLVSPCFLLYVVVVSIVTFRPPHYGAYIFPDWANALGWIIATSSMAMVPIYATYKFCSLPGSFREKLAYAITPEKDRQLVDRGEVRQFTLRHWLLV</sequence>
<name>SC6A3_MOUSE</name>
<evidence type="ECO:0000250" key="1"/>
<evidence type="ECO:0000250" key="2">
    <source>
        <dbReference type="UniProtKB" id="P23977"/>
    </source>
</evidence>
<evidence type="ECO:0000250" key="3">
    <source>
        <dbReference type="UniProtKB" id="Q01959"/>
    </source>
</evidence>
<evidence type="ECO:0000255" key="4"/>
<evidence type="ECO:0000269" key="5">
    <source>
    </source>
</evidence>
<evidence type="ECO:0000269" key="6">
    <source>
    </source>
</evidence>
<evidence type="ECO:0000269" key="7">
    <source>
    </source>
</evidence>
<evidence type="ECO:0000269" key="8">
    <source>
    </source>
</evidence>
<evidence type="ECO:0000269" key="9">
    <source>
    </source>
</evidence>
<evidence type="ECO:0000269" key="10">
    <source>
    </source>
</evidence>
<evidence type="ECO:0000305" key="11"/>